<comment type="function">
    <text evidence="3 4 5 6">Flavoenzyme involved in polyamine back-conversion (PubMed:24550437, PubMed:24906355, PubMed:26973665, PubMed:28199662). Catalyzes the oxidation of the secondary amino group of polyamines, such as spermine and its acetyl derivatives (PubMed:24550437, PubMed:24906355, PubMed:28199662). Substrate preference is spermine &gt; N(1)-acetylspermine &gt; thermospermine &gt; norspermine (PubMed:24550437). Plays an important role in the regulation of polyamine intracellular concentration (PubMed:24550437, PubMed:26973665, PubMed:28199662). Involved in xylem differentiation by controlling thermospermine homeostasis, and participating in the tightly controlled interplay between auxin and cytokinin that is necessary for proper xylem differentiation (PubMed:28199662). Involved in the production of hydrogen peroxide in response to salt and cold stresses (PubMed:26973665).</text>
</comment>
<comment type="catalytic activity">
    <reaction evidence="3">
        <text>spermine + O2 + H2O = 3-aminopropanal + spermidine + H2O2</text>
        <dbReference type="Rhea" id="RHEA:25804"/>
        <dbReference type="ChEBI" id="CHEBI:15377"/>
        <dbReference type="ChEBI" id="CHEBI:15379"/>
        <dbReference type="ChEBI" id="CHEBI:16240"/>
        <dbReference type="ChEBI" id="CHEBI:45725"/>
        <dbReference type="ChEBI" id="CHEBI:57834"/>
        <dbReference type="ChEBI" id="CHEBI:58374"/>
    </reaction>
</comment>
<comment type="catalytic activity">
    <reaction evidence="3">
        <text>N(1)-acetylspermine + O2 + H2O = 3-acetamidopropanal + spermidine + H2O2</text>
        <dbReference type="Rhea" id="RHEA:25800"/>
        <dbReference type="ChEBI" id="CHEBI:15377"/>
        <dbReference type="ChEBI" id="CHEBI:15379"/>
        <dbReference type="ChEBI" id="CHEBI:16240"/>
        <dbReference type="ChEBI" id="CHEBI:30322"/>
        <dbReference type="ChEBI" id="CHEBI:57834"/>
        <dbReference type="ChEBI" id="CHEBI:58101"/>
    </reaction>
</comment>
<comment type="catalytic activity">
    <reaction evidence="3">
        <text>norspermine + O2 + H2O = norspermidine + 3-aminopropanal + H2O2</text>
        <dbReference type="Rhea" id="RHEA:25816"/>
        <dbReference type="ChEBI" id="CHEBI:15377"/>
        <dbReference type="ChEBI" id="CHEBI:15379"/>
        <dbReference type="ChEBI" id="CHEBI:16240"/>
        <dbReference type="ChEBI" id="CHEBI:57920"/>
        <dbReference type="ChEBI" id="CHEBI:58374"/>
        <dbReference type="ChEBI" id="CHEBI:58704"/>
    </reaction>
</comment>
<comment type="catalytic activity">
    <reaction evidence="3">
        <text>thermospermine + O2 + H2O = 3-aminopropanal + spermidine + H2O2</text>
        <dbReference type="Rhea" id="RHEA:57836"/>
        <dbReference type="ChEBI" id="CHEBI:15377"/>
        <dbReference type="ChEBI" id="CHEBI:15379"/>
        <dbReference type="ChEBI" id="CHEBI:16240"/>
        <dbReference type="ChEBI" id="CHEBI:57834"/>
        <dbReference type="ChEBI" id="CHEBI:58374"/>
        <dbReference type="ChEBI" id="CHEBI:59903"/>
    </reaction>
</comment>
<comment type="cofactor">
    <cofactor evidence="3">
        <name>FAD</name>
        <dbReference type="ChEBI" id="CHEBI:57692"/>
    </cofactor>
    <text evidence="9">Binds 1 FAD per subunit.</text>
</comment>
<comment type="biophysicochemical properties">
    <kinetics>
        <KM evidence="4">2.18 uM for N(1)-acetylspermine (at pH 6.5 and 37 degrees Celsius)</KM>
        <KM evidence="4">1.92 uM for N(1)-acetylspermine (at pH 7.5 and 37 degrees Celsius)</KM>
        <KM evidence="4">13.65 uM for thermospermine (at pH 6.5 and 37 degrees Celsius)</KM>
        <KM evidence="4">5.09 uM for thermospermine (at pH 7.5 and 37 degrees Celsius)</KM>
        <KM evidence="4">15.81 uM for norspermine (at pH 6.5 and 37 degrees Celsius)</KM>
        <KM evidence="4">25.54 uM for norspermine (at pH 7.5 and 37 degrees Celsius)</KM>
        <KM evidence="4">78.67 uM for spermine (at pH 6.5 and 37 degrees Celsius)</KM>
        <KM evidence="4">25.56 uM for spermine (at pH 7.5 and 37 degrees Celsius)</KM>
    </kinetics>
    <phDependence>
        <text evidence="4">Optimum pH is 6.5 with thermospermine as substrate (PubMed:24906355). Optimum pH is 7.5 with spermine as substrate (PubMed:24906355).</text>
    </phDependence>
    <temperatureDependence>
        <text evidence="4">Optimum temperature is 40-45 degrees Celsius with thermospermine as substrate (PubMed:24906355). Optimum temperature is 35-45 degrees Celsius with spermine as substrate (PubMed:24906355).</text>
    </temperatureDependence>
</comment>
<comment type="pathway">
    <text evidence="8">Amine and polyamine degradation; spermine degradation.</text>
</comment>
<comment type="subcellular location">
    <subcellularLocation>
        <location evidence="3 4 10">Cytoplasm</location>
    </subcellularLocation>
</comment>
<comment type="tissue specificity">
    <text evidence="5">Expressed in root vasculature, leaves and stems.</text>
</comment>
<comment type="induction">
    <text evidence="2 3 6">Induced by salicylic acid (PubMed:18583528). Down-regulated upon treatment with flagellin 22, a pathogen elicitor (PubMed:18583528). Induced by auxin, cytokinin and thermospermine in roots (PubMed:28199662). Induced by spermine, thermospermine, N-acetylspermine and spermidine in roots (PubMed:24550437).</text>
</comment>
<comment type="disruption phenotype">
    <text evidence="4 5 6">No visible phenotype of seedlings under normal growth conditions (PubMed:26973665). The double mutants pao1 and pao5 exhibit enhanced tolerance to salt and drought stress (PubMed:26973665). Increased length and thickness of floral stems (PubMed:28199662). Increased length of roots (PubMed:28199662). Delayed transition from vegetative to reproductive stage (PubMed:24906355). Increased levels of thermospermine (PubMed:24906355).</text>
</comment>
<comment type="similarity">
    <text evidence="8">Belongs to the flavin monoamine oxidase family.</text>
</comment>
<dbReference type="EC" id="1.5.3.-" evidence="3"/>
<dbReference type="EMBL" id="AL079344">
    <property type="protein sequence ID" value="CAB45332.1"/>
    <property type="molecule type" value="Genomic_DNA"/>
</dbReference>
<dbReference type="EMBL" id="AL161575">
    <property type="protein sequence ID" value="CAB79730.1"/>
    <property type="molecule type" value="Genomic_DNA"/>
</dbReference>
<dbReference type="EMBL" id="CP002687">
    <property type="protein sequence ID" value="AEE85665.1"/>
    <property type="molecule type" value="Genomic_DNA"/>
</dbReference>
<dbReference type="EMBL" id="AK118203">
    <property type="protein sequence ID" value="BAC42825.1"/>
    <property type="molecule type" value="mRNA"/>
</dbReference>
<dbReference type="EMBL" id="BT005501">
    <property type="protein sequence ID" value="AAO63921.1"/>
    <property type="molecule type" value="mRNA"/>
</dbReference>
<dbReference type="EMBL" id="AY085576">
    <property type="protein sequence ID" value="AAM62798.1"/>
    <property type="molecule type" value="mRNA"/>
</dbReference>
<dbReference type="PIR" id="T09935">
    <property type="entry name" value="T09935"/>
</dbReference>
<dbReference type="RefSeq" id="NP_194701.1">
    <property type="nucleotide sequence ID" value="NM_119117.2"/>
</dbReference>
<dbReference type="SMR" id="Q9SU79"/>
<dbReference type="FunCoup" id="Q9SU79">
    <property type="interactions" value="1467"/>
</dbReference>
<dbReference type="STRING" id="3702.Q9SU79"/>
<dbReference type="iPTMnet" id="Q9SU79"/>
<dbReference type="PaxDb" id="3702-AT4G29720.1"/>
<dbReference type="ProteomicsDB" id="236832"/>
<dbReference type="EnsemblPlants" id="AT4G29720.1">
    <property type="protein sequence ID" value="AT4G29720.1"/>
    <property type="gene ID" value="AT4G29720"/>
</dbReference>
<dbReference type="GeneID" id="829093"/>
<dbReference type="Gramene" id="AT4G29720.1">
    <property type="protein sequence ID" value="AT4G29720.1"/>
    <property type="gene ID" value="AT4G29720"/>
</dbReference>
<dbReference type="KEGG" id="ath:AT4G29720"/>
<dbReference type="Araport" id="AT4G29720"/>
<dbReference type="TAIR" id="AT4G29720">
    <property type="gene designation" value="PAO5"/>
</dbReference>
<dbReference type="eggNOG" id="KOG0685">
    <property type="taxonomic scope" value="Eukaryota"/>
</dbReference>
<dbReference type="HOGENOM" id="CLU_004498_2_3_1"/>
<dbReference type="InParanoid" id="Q9SU79"/>
<dbReference type="OMA" id="GTHSMDE"/>
<dbReference type="PhylomeDB" id="Q9SU79"/>
<dbReference type="BRENDA" id="1.5.3.13">
    <property type="organism ID" value="399"/>
</dbReference>
<dbReference type="BRENDA" id="1.5.3.16">
    <property type="organism ID" value="399"/>
</dbReference>
<dbReference type="BRENDA" id="1.5.3.17">
    <property type="organism ID" value="399"/>
</dbReference>
<dbReference type="UniPathway" id="UPA00211"/>
<dbReference type="PRO" id="PR:Q9SU79"/>
<dbReference type="Proteomes" id="UP000006548">
    <property type="component" value="Chromosome 4"/>
</dbReference>
<dbReference type="ExpressionAtlas" id="Q9SU79">
    <property type="expression patterns" value="baseline and differential"/>
</dbReference>
<dbReference type="GO" id="GO:0005737">
    <property type="term" value="C:cytoplasm"/>
    <property type="evidence" value="ECO:0000314"/>
    <property type="project" value="TAIR"/>
</dbReference>
<dbReference type="GO" id="GO:0050660">
    <property type="term" value="F:flavin adenine dinucleotide binding"/>
    <property type="evidence" value="ECO:0007669"/>
    <property type="project" value="EnsemblPlants"/>
</dbReference>
<dbReference type="GO" id="GO:0052903">
    <property type="term" value="F:N(1)-acetylpolyamine oxidase (3-acetamidopropanal-forming) activity"/>
    <property type="evidence" value="ECO:0007669"/>
    <property type="project" value="EnsemblPlants"/>
</dbReference>
<dbReference type="GO" id="GO:0052901">
    <property type="term" value="F:spermine oxidase activity"/>
    <property type="evidence" value="ECO:0007669"/>
    <property type="project" value="EnsemblPlants"/>
</dbReference>
<dbReference type="GO" id="GO:1990534">
    <property type="term" value="F:thermospermine oxidase activity"/>
    <property type="evidence" value="ECO:0000315"/>
    <property type="project" value="TAIR"/>
</dbReference>
<dbReference type="GO" id="GO:0048510">
    <property type="term" value="P:regulation of timing of transition from vegetative to reproductive phase"/>
    <property type="evidence" value="ECO:0000315"/>
    <property type="project" value="TAIR"/>
</dbReference>
<dbReference type="GO" id="GO:0046208">
    <property type="term" value="P:spermine catabolic process"/>
    <property type="evidence" value="ECO:0007669"/>
    <property type="project" value="UniProtKB-UniPathway"/>
</dbReference>
<dbReference type="GO" id="GO:1903602">
    <property type="term" value="P:thermospermine catabolic process"/>
    <property type="evidence" value="ECO:0007669"/>
    <property type="project" value="EnsemblPlants"/>
</dbReference>
<dbReference type="FunFam" id="3.50.50.60:FF:000994">
    <property type="entry name" value="Probable polyamine oxidase 5"/>
    <property type="match status" value="1"/>
</dbReference>
<dbReference type="Gene3D" id="3.90.660.10">
    <property type="match status" value="1"/>
</dbReference>
<dbReference type="Gene3D" id="3.50.50.60">
    <property type="entry name" value="FAD/NAD(P)-binding domain"/>
    <property type="match status" value="2"/>
</dbReference>
<dbReference type="InterPro" id="IPR002937">
    <property type="entry name" value="Amino_oxidase"/>
</dbReference>
<dbReference type="InterPro" id="IPR036188">
    <property type="entry name" value="FAD/NAD-bd_sf"/>
</dbReference>
<dbReference type="InterPro" id="IPR050281">
    <property type="entry name" value="Flavin_monoamine_oxidase"/>
</dbReference>
<dbReference type="PANTHER" id="PTHR10742">
    <property type="entry name" value="FLAVIN MONOAMINE OXIDASE"/>
    <property type="match status" value="1"/>
</dbReference>
<dbReference type="PANTHER" id="PTHR10742:SF405">
    <property type="entry name" value="PEROXISOMAL N(1)-ACETYL-SPERMINE_SPERMIDINE OXIDASE"/>
    <property type="match status" value="1"/>
</dbReference>
<dbReference type="Pfam" id="PF01593">
    <property type="entry name" value="Amino_oxidase"/>
    <property type="match status" value="1"/>
</dbReference>
<dbReference type="SUPFAM" id="SSF54373">
    <property type="entry name" value="FAD-linked reductases, C-terminal domain"/>
    <property type="match status" value="1"/>
</dbReference>
<dbReference type="SUPFAM" id="SSF51905">
    <property type="entry name" value="FAD/NAD(P)-binding domain"/>
    <property type="match status" value="1"/>
</dbReference>
<protein>
    <recommendedName>
        <fullName evidence="7">Probable polyamine oxidase 5</fullName>
        <shortName evidence="7">AtPAO5</shortName>
        <ecNumber evidence="3">1.5.3.-</ecNumber>
    </recommendedName>
</protein>
<feature type="chain" id="PRO_0000352511" description="Probable polyamine oxidase 5">
    <location>
        <begin position="1"/>
        <end position="533"/>
    </location>
</feature>
<feature type="binding site" evidence="1">
    <location>
        <position position="37"/>
    </location>
    <ligand>
        <name>FAD</name>
        <dbReference type="ChEBI" id="CHEBI:57692"/>
    </ligand>
</feature>
<feature type="binding site" evidence="1">
    <location>
        <position position="45"/>
    </location>
    <ligand>
        <name>FAD</name>
        <dbReference type="ChEBI" id="CHEBI:57692"/>
    </ligand>
</feature>
<feature type="binding site" evidence="1">
    <location>
        <position position="262"/>
    </location>
    <ligand>
        <name>FAD</name>
        <dbReference type="ChEBI" id="CHEBI:57692"/>
    </ligand>
</feature>
<feature type="binding site" evidence="1">
    <location>
        <position position="501"/>
    </location>
    <ligand>
        <name>FAD</name>
        <dbReference type="ChEBI" id="CHEBI:57692"/>
    </ligand>
</feature>
<accession>Q9SU79</accession>
<evidence type="ECO:0000250" key="1">
    <source>
        <dbReference type="UniProtKB" id="O64411"/>
    </source>
</evidence>
<evidence type="ECO:0000269" key="2">
    <source>
    </source>
</evidence>
<evidence type="ECO:0000269" key="3">
    <source>
    </source>
</evidence>
<evidence type="ECO:0000269" key="4">
    <source>
    </source>
</evidence>
<evidence type="ECO:0000269" key="5">
    <source>
    </source>
</evidence>
<evidence type="ECO:0000269" key="6">
    <source>
    </source>
</evidence>
<evidence type="ECO:0000303" key="7">
    <source>
    </source>
</evidence>
<evidence type="ECO:0000305" key="8"/>
<evidence type="ECO:0000305" key="9">
    <source>
    </source>
</evidence>
<evidence type="ECO:0000305" key="10">
    <source>
    </source>
</evidence>
<evidence type="ECO:0000312" key="11">
    <source>
        <dbReference type="Araport" id="AT4G29720"/>
    </source>
</evidence>
<evidence type="ECO:0000312" key="12">
    <source>
        <dbReference type="EMBL" id="CAB45332.1"/>
    </source>
</evidence>
<name>PAO5_ARATH</name>
<keyword id="KW-0963">Cytoplasm</keyword>
<keyword id="KW-0274">FAD</keyword>
<keyword id="KW-0285">Flavoprotein</keyword>
<keyword id="KW-0560">Oxidoreductase</keyword>
<keyword id="KW-1185">Reference proteome</keyword>
<keyword id="KW-0346">Stress response</keyword>
<proteinExistence type="evidence at protein level"/>
<sequence length="533" mass="58686">MAKKARIVIIGAGMAGLTAANKLYTSSNNTFELSVVEGGSRIGGRINTSEFSSEKIEMGATWIHGIGGSPVYRIAKETGSLVSDEPWECMDSTIDKAKTFAEGGFEIEPSIVESISGLFTALMELAQGKEISQSDADLSRLAHIYETATRVCSKGSSTSVGSFLKSGFDAYWDSISNGGEEGVKGYGKWSRKSLEEAIFTMFSNTQRTYTSADELSTLDFAAESEYQMFPGEEITIAKGYLSVIHHLASVLPQGVIQLNRKVTKIEWQSNEVKLHFSDGSVVFADHVIVTVSLGVLKAGIETDAELFSPPLPDFKSDAIRRLGYGVVNKLFVEMSQRKFPSLQLVFDREDSEFRFVKIPWWMRRTATITPIHSNSKVLLSWFAGKEALELEKLTDEEIKDAVMTTISCLTGKEVKNDTAKPLTNGSLNDDDEAMKITKVLKSKWGSDPLFRGSYSYVAVGSSGDDLDAMAEPLPKINKKVGQVNGHDQAKVHELQVMFAGEATHRTHYSTTHGAYYSGLREANRLLKHYKCNF</sequence>
<gene>
    <name evidence="7" type="primary">PAO5</name>
    <name evidence="11" type="ordered locus">At4g29720</name>
    <name evidence="12" type="ORF">T16L4.230</name>
</gene>
<organism>
    <name type="scientific">Arabidopsis thaliana</name>
    <name type="common">Mouse-ear cress</name>
    <dbReference type="NCBI Taxonomy" id="3702"/>
    <lineage>
        <taxon>Eukaryota</taxon>
        <taxon>Viridiplantae</taxon>
        <taxon>Streptophyta</taxon>
        <taxon>Embryophyta</taxon>
        <taxon>Tracheophyta</taxon>
        <taxon>Spermatophyta</taxon>
        <taxon>Magnoliopsida</taxon>
        <taxon>eudicotyledons</taxon>
        <taxon>Gunneridae</taxon>
        <taxon>Pentapetalae</taxon>
        <taxon>rosids</taxon>
        <taxon>malvids</taxon>
        <taxon>Brassicales</taxon>
        <taxon>Brassicaceae</taxon>
        <taxon>Camelineae</taxon>
        <taxon>Arabidopsis</taxon>
    </lineage>
</organism>
<reference key="1">
    <citation type="journal article" date="1999" name="Nature">
        <title>Sequence and analysis of chromosome 4 of the plant Arabidopsis thaliana.</title>
        <authorList>
            <person name="Mayer K.F.X."/>
            <person name="Schueller C."/>
            <person name="Wambutt R."/>
            <person name="Murphy G."/>
            <person name="Volckaert G."/>
            <person name="Pohl T."/>
            <person name="Duesterhoeft A."/>
            <person name="Stiekema W."/>
            <person name="Entian K.-D."/>
            <person name="Terryn N."/>
            <person name="Harris B."/>
            <person name="Ansorge W."/>
            <person name="Brandt P."/>
            <person name="Grivell L.A."/>
            <person name="Rieger M."/>
            <person name="Weichselgartner M."/>
            <person name="de Simone V."/>
            <person name="Obermaier B."/>
            <person name="Mache R."/>
            <person name="Mueller M."/>
            <person name="Kreis M."/>
            <person name="Delseny M."/>
            <person name="Puigdomenech P."/>
            <person name="Watson M."/>
            <person name="Schmidtheini T."/>
            <person name="Reichert B."/>
            <person name="Portetelle D."/>
            <person name="Perez-Alonso M."/>
            <person name="Boutry M."/>
            <person name="Bancroft I."/>
            <person name="Vos P."/>
            <person name="Hoheisel J."/>
            <person name="Zimmermann W."/>
            <person name="Wedler H."/>
            <person name="Ridley P."/>
            <person name="Langham S.-A."/>
            <person name="McCullagh B."/>
            <person name="Bilham L."/>
            <person name="Robben J."/>
            <person name="van der Schueren J."/>
            <person name="Grymonprez B."/>
            <person name="Chuang Y.-J."/>
            <person name="Vandenbussche F."/>
            <person name="Braeken M."/>
            <person name="Weltjens I."/>
            <person name="Voet M."/>
            <person name="Bastiaens I."/>
            <person name="Aert R."/>
            <person name="Defoor E."/>
            <person name="Weitzenegger T."/>
            <person name="Bothe G."/>
            <person name="Ramsperger U."/>
            <person name="Hilbert H."/>
            <person name="Braun M."/>
            <person name="Holzer E."/>
            <person name="Brandt A."/>
            <person name="Peters S."/>
            <person name="van Staveren M."/>
            <person name="Dirkse W."/>
            <person name="Mooijman P."/>
            <person name="Klein Lankhorst R."/>
            <person name="Rose M."/>
            <person name="Hauf J."/>
            <person name="Koetter P."/>
            <person name="Berneiser S."/>
            <person name="Hempel S."/>
            <person name="Feldpausch M."/>
            <person name="Lamberth S."/>
            <person name="Van den Daele H."/>
            <person name="De Keyser A."/>
            <person name="Buysshaert C."/>
            <person name="Gielen J."/>
            <person name="Villarroel R."/>
            <person name="De Clercq R."/>
            <person name="van Montagu M."/>
            <person name="Rogers J."/>
            <person name="Cronin A."/>
            <person name="Quail M.A."/>
            <person name="Bray-Allen S."/>
            <person name="Clark L."/>
            <person name="Doggett J."/>
            <person name="Hall S."/>
            <person name="Kay M."/>
            <person name="Lennard N."/>
            <person name="McLay K."/>
            <person name="Mayes R."/>
            <person name="Pettett A."/>
            <person name="Rajandream M.A."/>
            <person name="Lyne M."/>
            <person name="Benes V."/>
            <person name="Rechmann S."/>
            <person name="Borkova D."/>
            <person name="Bloecker H."/>
            <person name="Scharfe M."/>
            <person name="Grimm M."/>
            <person name="Loehnert T.-H."/>
            <person name="Dose S."/>
            <person name="de Haan M."/>
            <person name="Maarse A.C."/>
            <person name="Schaefer M."/>
            <person name="Mueller-Auer S."/>
            <person name="Gabel C."/>
            <person name="Fuchs M."/>
            <person name="Fartmann B."/>
            <person name="Granderath K."/>
            <person name="Dauner D."/>
            <person name="Herzl A."/>
            <person name="Neumann S."/>
            <person name="Argiriou A."/>
            <person name="Vitale D."/>
            <person name="Liguori R."/>
            <person name="Piravandi E."/>
            <person name="Massenet O."/>
            <person name="Quigley F."/>
            <person name="Clabauld G."/>
            <person name="Muendlein A."/>
            <person name="Felber R."/>
            <person name="Schnabl S."/>
            <person name="Hiller R."/>
            <person name="Schmidt W."/>
            <person name="Lecharny A."/>
            <person name="Aubourg S."/>
            <person name="Chefdor F."/>
            <person name="Cooke R."/>
            <person name="Berger C."/>
            <person name="Monfort A."/>
            <person name="Casacuberta E."/>
            <person name="Gibbons T."/>
            <person name="Weber N."/>
            <person name="Vandenbol M."/>
            <person name="Bargues M."/>
            <person name="Terol J."/>
            <person name="Torres A."/>
            <person name="Perez-Perez A."/>
            <person name="Purnelle B."/>
            <person name="Bent E."/>
            <person name="Johnson S."/>
            <person name="Tacon D."/>
            <person name="Jesse T."/>
            <person name="Heijnen L."/>
            <person name="Schwarz S."/>
            <person name="Scholler P."/>
            <person name="Heber S."/>
            <person name="Francs P."/>
            <person name="Bielke C."/>
            <person name="Frishman D."/>
            <person name="Haase D."/>
            <person name="Lemcke K."/>
            <person name="Mewes H.-W."/>
            <person name="Stocker S."/>
            <person name="Zaccaria P."/>
            <person name="Bevan M."/>
            <person name="Wilson R.K."/>
            <person name="de la Bastide M."/>
            <person name="Habermann K."/>
            <person name="Parnell L."/>
            <person name="Dedhia N."/>
            <person name="Gnoj L."/>
            <person name="Schutz K."/>
            <person name="Huang E."/>
            <person name="Spiegel L."/>
            <person name="Sekhon M."/>
            <person name="Murray J."/>
            <person name="Sheet P."/>
            <person name="Cordes M."/>
            <person name="Abu-Threideh J."/>
            <person name="Stoneking T."/>
            <person name="Kalicki J."/>
            <person name="Graves T."/>
            <person name="Harmon G."/>
            <person name="Edwards J."/>
            <person name="Latreille P."/>
            <person name="Courtney L."/>
            <person name="Cloud J."/>
            <person name="Abbott A."/>
            <person name="Scott K."/>
            <person name="Johnson D."/>
            <person name="Minx P."/>
            <person name="Bentley D."/>
            <person name="Fulton B."/>
            <person name="Miller N."/>
            <person name="Greco T."/>
            <person name="Kemp K."/>
            <person name="Kramer J."/>
            <person name="Fulton L."/>
            <person name="Mardis E."/>
            <person name="Dante M."/>
            <person name="Pepin K."/>
            <person name="Hillier L.W."/>
            <person name="Nelson J."/>
            <person name="Spieth J."/>
            <person name="Ryan E."/>
            <person name="Andrews S."/>
            <person name="Geisel C."/>
            <person name="Layman D."/>
            <person name="Du H."/>
            <person name="Ali J."/>
            <person name="Berghoff A."/>
            <person name="Jones K."/>
            <person name="Drone K."/>
            <person name="Cotton M."/>
            <person name="Joshu C."/>
            <person name="Antonoiu B."/>
            <person name="Zidanic M."/>
            <person name="Strong C."/>
            <person name="Sun H."/>
            <person name="Lamar B."/>
            <person name="Yordan C."/>
            <person name="Ma P."/>
            <person name="Zhong J."/>
            <person name="Preston R."/>
            <person name="Vil D."/>
            <person name="Shekher M."/>
            <person name="Matero A."/>
            <person name="Shah R."/>
            <person name="Swaby I.K."/>
            <person name="O'Shaughnessy A."/>
            <person name="Rodriguez M."/>
            <person name="Hoffman J."/>
            <person name="Till S."/>
            <person name="Granat S."/>
            <person name="Shohdy N."/>
            <person name="Hasegawa A."/>
            <person name="Hameed A."/>
            <person name="Lodhi M."/>
            <person name="Johnson A."/>
            <person name="Chen E."/>
            <person name="Marra M.A."/>
            <person name="Martienssen R."/>
            <person name="McCombie W.R."/>
        </authorList>
    </citation>
    <scope>NUCLEOTIDE SEQUENCE [LARGE SCALE GENOMIC DNA]</scope>
    <source>
        <strain>cv. Columbia</strain>
    </source>
</reference>
<reference key="2">
    <citation type="journal article" date="2017" name="Plant J.">
        <title>Araport11: a complete reannotation of the Arabidopsis thaliana reference genome.</title>
        <authorList>
            <person name="Cheng C.Y."/>
            <person name="Krishnakumar V."/>
            <person name="Chan A.P."/>
            <person name="Thibaud-Nissen F."/>
            <person name="Schobel S."/>
            <person name="Town C.D."/>
        </authorList>
    </citation>
    <scope>GENOME REANNOTATION</scope>
    <source>
        <strain>cv. Columbia</strain>
    </source>
</reference>
<reference key="3">
    <citation type="journal article" date="2002" name="Science">
        <title>Functional annotation of a full-length Arabidopsis cDNA collection.</title>
        <authorList>
            <person name="Seki M."/>
            <person name="Narusaka M."/>
            <person name="Kamiya A."/>
            <person name="Ishida J."/>
            <person name="Satou M."/>
            <person name="Sakurai T."/>
            <person name="Nakajima M."/>
            <person name="Enju A."/>
            <person name="Akiyama K."/>
            <person name="Oono Y."/>
            <person name="Muramatsu M."/>
            <person name="Hayashizaki Y."/>
            <person name="Kawai J."/>
            <person name="Carninci P."/>
            <person name="Itoh M."/>
            <person name="Ishii Y."/>
            <person name="Arakawa T."/>
            <person name="Shibata K."/>
            <person name="Shinagawa A."/>
            <person name="Shinozaki K."/>
        </authorList>
    </citation>
    <scope>NUCLEOTIDE SEQUENCE [LARGE SCALE MRNA]</scope>
    <source>
        <strain>cv. Columbia</strain>
    </source>
</reference>
<reference key="4">
    <citation type="journal article" date="2003" name="Science">
        <title>Empirical analysis of transcriptional activity in the Arabidopsis genome.</title>
        <authorList>
            <person name="Yamada K."/>
            <person name="Lim J."/>
            <person name="Dale J.M."/>
            <person name="Chen H."/>
            <person name="Shinn P."/>
            <person name="Palm C.J."/>
            <person name="Southwick A.M."/>
            <person name="Wu H.C."/>
            <person name="Kim C.J."/>
            <person name="Nguyen M."/>
            <person name="Pham P.K."/>
            <person name="Cheuk R.F."/>
            <person name="Karlin-Newmann G."/>
            <person name="Liu S.X."/>
            <person name="Lam B."/>
            <person name="Sakano H."/>
            <person name="Wu T."/>
            <person name="Yu G."/>
            <person name="Miranda M."/>
            <person name="Quach H.L."/>
            <person name="Tripp M."/>
            <person name="Chang C.H."/>
            <person name="Lee J.M."/>
            <person name="Toriumi M.J."/>
            <person name="Chan M.M."/>
            <person name="Tang C.C."/>
            <person name="Onodera C.S."/>
            <person name="Deng J.M."/>
            <person name="Akiyama K."/>
            <person name="Ansari Y."/>
            <person name="Arakawa T."/>
            <person name="Banh J."/>
            <person name="Banno F."/>
            <person name="Bowser L."/>
            <person name="Brooks S.Y."/>
            <person name="Carninci P."/>
            <person name="Chao Q."/>
            <person name="Choy N."/>
            <person name="Enju A."/>
            <person name="Goldsmith A.D."/>
            <person name="Gurjal M."/>
            <person name="Hansen N.F."/>
            <person name="Hayashizaki Y."/>
            <person name="Johnson-Hopson C."/>
            <person name="Hsuan V.W."/>
            <person name="Iida K."/>
            <person name="Karnes M."/>
            <person name="Khan S."/>
            <person name="Koesema E."/>
            <person name="Ishida J."/>
            <person name="Jiang P.X."/>
            <person name="Jones T."/>
            <person name="Kawai J."/>
            <person name="Kamiya A."/>
            <person name="Meyers C."/>
            <person name="Nakajima M."/>
            <person name="Narusaka M."/>
            <person name="Seki M."/>
            <person name="Sakurai T."/>
            <person name="Satou M."/>
            <person name="Tamse R."/>
            <person name="Vaysberg M."/>
            <person name="Wallender E.K."/>
            <person name="Wong C."/>
            <person name="Yamamura Y."/>
            <person name="Yuan S."/>
            <person name="Shinozaki K."/>
            <person name="Davis R.W."/>
            <person name="Theologis A."/>
            <person name="Ecker J.R."/>
        </authorList>
    </citation>
    <scope>NUCLEOTIDE SEQUENCE [LARGE SCALE MRNA]</scope>
    <source>
        <strain>cv. Columbia</strain>
    </source>
</reference>
<reference key="5">
    <citation type="submission" date="2002-03" db="EMBL/GenBank/DDBJ databases">
        <title>Full-length cDNA from Arabidopsis thaliana.</title>
        <authorList>
            <person name="Brover V.V."/>
            <person name="Troukhan M.E."/>
            <person name="Alexandrov N.A."/>
            <person name="Lu Y.-P."/>
            <person name="Flavell R.B."/>
            <person name="Feldmann K.A."/>
        </authorList>
    </citation>
    <scope>NUCLEOTIDE SEQUENCE [LARGE SCALE MRNA]</scope>
</reference>
<reference key="6">
    <citation type="journal article" date="2006" name="Plant Physiol.">
        <title>Heterologous expression and biochemical characterization of a polyamine oxidase from Arabidopsis involved in polyamine back conversion.</title>
        <authorList>
            <person name="Tavladoraki P."/>
            <person name="Rossi M.N."/>
            <person name="Saccuti G."/>
            <person name="Perez-Amador M.A."/>
            <person name="Polticelli F."/>
            <person name="Angelini R."/>
            <person name="Federico R."/>
        </authorList>
    </citation>
    <scope>IDENTIFICATION</scope>
</reference>
<reference key="7">
    <citation type="journal article" date="2008" name="Plant Physiol.">
        <title>Bridging the gap between plant and mammalian polyamine catabolism: a novel peroxisomal polyamine oxidase responsible for a full back-conversion pathway in Arabidopsis thaliana.</title>
        <authorList>
            <person name="Moschou P.N."/>
            <person name="Sanmartin M."/>
            <person name="Andriopoulou A.H."/>
            <person name="Rojo E."/>
            <person name="Sanchez-Serrano J.J."/>
            <person name="Roubelakis-Angelakis K.A."/>
        </authorList>
    </citation>
    <scope>INDUCTION</scope>
</reference>
<reference key="8">
    <citation type="journal article" date="2014" name="J. Exp. Bot.">
        <title>A plant spermine oxidase/dehydrogenase regulated by the proteasome and polyamines.</title>
        <authorList>
            <person name="Ahou A."/>
            <person name="Martignago D."/>
            <person name="Alabdallah O."/>
            <person name="Tavazza R."/>
            <person name="Stano P."/>
            <person name="Macone A."/>
            <person name="Pivato M."/>
            <person name="Masi A."/>
            <person name="Rambla J.L."/>
            <person name="Vera-Sirera F."/>
            <person name="Angelini R."/>
            <person name="Federico R."/>
            <person name="Tavladoraki P."/>
        </authorList>
    </citation>
    <scope>FUNCTION</scope>
    <scope>CATALYTIC ACTIVITY</scope>
    <scope>COFACTOR</scope>
    <scope>SUBCELLULAR LOCATION</scope>
    <scope>INDUCTION</scope>
</reference>
<reference key="9">
    <citation type="journal article" date="2014" name="Plant Physiol.">
        <title>Polyamine oxidase5 regulates Arabidopsis growth through thermospermine oxidase activity.</title>
        <authorList>
            <person name="Kim D.W."/>
            <person name="Watanabe K."/>
            <person name="Murayama C."/>
            <person name="Izawa S."/>
            <person name="Niitsu M."/>
            <person name="Michael A.J."/>
            <person name="Berberich T."/>
            <person name="Kusano T."/>
        </authorList>
    </citation>
    <scope>FUNCTION</scope>
    <scope>COFACTOR</scope>
    <scope>BIOPHYSICOCHEMICAL PROPERTIES</scope>
    <scope>DISRUPTION PHENOTYPE</scope>
</reference>
<reference key="10">
    <citation type="journal article" date="2016" name="Front. Plant Sci.">
        <title>Reducing cytoplasmic polyamine oxidase activity in Arabidopsis increases salt and drought tolerance by reducing reactive oxygen species production and increasing defense gene expression.</title>
        <authorList>
            <person name="Sagor G.H."/>
            <person name="Zhang S."/>
            <person name="Kojima S."/>
            <person name="Simm S."/>
            <person name="Berberich T."/>
            <person name="Kusano T."/>
        </authorList>
    </citation>
    <scope>FUNCTION</scope>
    <scope>SUBCELLULAR LOCATION</scope>
    <scope>DISRUPTION PHENOTYPE</scope>
</reference>
<reference key="11">
    <citation type="journal article" date="2017" name="J. Exp. Bot.">
        <title>The Arabidopsis polyamine oxidase/dehydrogenase 5 interferes with cytokinin and auxin signaling pathways to control xylem differentiation.</title>
        <authorList>
            <person name="Alabdallah O."/>
            <person name="Ahou A."/>
            <person name="Mancuso N."/>
            <person name="Pompili V."/>
            <person name="Macone A."/>
            <person name="Pashkoulov D."/>
            <person name="Stano P."/>
            <person name="Cona A."/>
            <person name="Angelini R."/>
            <person name="Tavladoraki P."/>
        </authorList>
    </citation>
    <scope>FUNCTION</scope>
    <scope>TISSUE SPECIFICITY</scope>
    <scope>INDUCTION</scope>
    <scope>DISRUPTION PHENOTYPE</scope>
</reference>